<gene>
    <name type="primary">Nup160</name>
    <name type="synonym">Gtl1-13</name>
    <name type="synonym">Kiaa0197</name>
</gene>
<sequence>MAAAGSLERSFVELSGAERERPRHFREFTVCDIGTASAAFGTVKYSESAGGFYYVESGKLFSITRNRFIHWKTSGDTLELVEESLDLNLLNNAVRLKFQNYNILPGGVHVSETQNHVIILILTNQTVHRLILPHPSRMYRSELVTESQMQSIFTDIGKVDFRDPCNSQLIPSVPGLSPGSTTSAAWLSSDGEALFALPSASGGIFVLKLPPYDVPGIASVVELKQSSVMQRLLTGWMPTAIRGDHGPSDRALSLAVHCVEHDAFIFALCQDHKLRMWSYKDQMCLMVADMLEYVPVNKDLRLTAGTGHKLRLAYSPSMGLYLGIYMHAPKRGQFCVFQLVSTENNRYSLDHISSLFTSQETLVDFALTSTDIWALWHDAENQTIVKYINFEHNVAGQWNPVFMQPLPEEEIVIRDDQDPREMYLRSLFTPGHFINAALCKALQIFCRGTERNLDLSWNELKKEITLAVENELQGSVTEYEFSQDEFRTLQQEFWCKFYACVLQYQEALSHPLALHLNPVTNMVCLLKKGYLSFLVPSSLVDHLYLLPDEHLLTEDETTISDDADVARDVLCLIKCLRMIGESVTMDMAVLMETSCYNLQSPEKAAEHILEDLITIDVENVMEDICSKLQEIRNPVHAIGLLIREMDYETEVEMEKGFDPAQPLNVRMNLSQLYGSSTAGYIVCRGVYKIASTRFLICRDLLILQQLLTRLGDAVILGAGQLFQAQQDLLHRTAPLLLSYYLIKWASQCLATDVPVDTLESNLQHLSVLELTDSGALMANKLVSSPQTIMELFFQEVARKQIISHLFSQPKAPLSQTGLNWPEMITAVTGYLLQLLWPSNPGCLFLECLMGNCQYVQLQDYIQLLHPWCQVNVGSCRFMLGRCYLVTGEVQKALECFCQAASEVGKEEFLDRLIRSEDGEIVSTPKLQYYDKVLRLLDVVGLPELVIQLATSAITEAGDDWKSQATLRTCIFKHHLDLGHNSQAYEALTQIPDSSRQLDCLRQLVVVLCERSQLQDLVEFPYVNLHNEVVGIIESRARAVDLMTHNYYELLYAFHIYRHNYRKAGTVMFEYGMRLGREVRTLRGLEKQGNCYLAAINCLRLIRPEYAWIVQPASGAVSDRPGASPKRNHDGECTAAPTNRQIEILELEDLEKEYSLARIRLTLARHDPSVIAIAGSSSAKEMSALLVQAGLFDTAISLCQTFTLPLTPVFEGLAFKCIKLQFGGEAAQGEAWSWLATNQLSSVITTKESSATDEAWRLLSTYLERYKVQNNLYHHCVINKLLSHGVPLPNWLINSYKKVDAAELLRLYLNYDLLEEAVDLVSEYVDAVLGKGHQYFGIEFPLSATAPMVWLPYSSIDQLLQALGENSANSHNIILSQKILDKLEDYQQKVDKATRDLLYRRDL</sequence>
<name>NU160_MOUSE</name>
<accession>Q9Z0W3</accession>
<accession>Q3TBI7</accession>
<accession>Q3TP11</accession>
<accession>Q3U250</accession>
<accession>Q6A0A7</accession>
<accession>Q7TME1</accession>
<accession>Q9CZD9</accession>
<organism>
    <name type="scientific">Mus musculus</name>
    <name type="common">Mouse</name>
    <dbReference type="NCBI Taxonomy" id="10090"/>
    <lineage>
        <taxon>Eukaryota</taxon>
        <taxon>Metazoa</taxon>
        <taxon>Chordata</taxon>
        <taxon>Craniata</taxon>
        <taxon>Vertebrata</taxon>
        <taxon>Euteleostomi</taxon>
        <taxon>Mammalia</taxon>
        <taxon>Eutheria</taxon>
        <taxon>Euarchontoglires</taxon>
        <taxon>Glires</taxon>
        <taxon>Rodentia</taxon>
        <taxon>Myomorpha</taxon>
        <taxon>Muroidea</taxon>
        <taxon>Muridae</taxon>
        <taxon>Murinae</taxon>
        <taxon>Mus</taxon>
        <taxon>Mus</taxon>
    </lineage>
</organism>
<comment type="function">
    <text evidence="2 3">Functions as a component of the nuclear pore complex (NPC) (PubMed:11564755, PubMed:11684705). Involved in poly(A)+ RNA transport (PubMed:11684705).</text>
</comment>
<comment type="subunit">
    <text evidence="2 3">Part of the nuclear pore complex (NPC) (PubMed:11564755, PubMed:11684705). Forms part of the NUP160 subcomplex in the nuclear pore which is composed of NUP160, NUP133, NUP107 and NUP96 (PubMed:11564755, PubMed:11684705). This complex plays a role in RNA export and in tethering NUP98 and NUP153 to the nucleus (PubMed:11564755, PubMed:11684705).</text>
</comment>
<comment type="subcellular location">
    <subcellularLocation>
        <location evidence="2 3">Nucleus</location>
        <location evidence="2 3">Nuclear pore complex</location>
    </subcellularLocation>
</comment>
<comment type="alternative products">
    <event type="alternative splicing"/>
    <isoform>
        <id>Q9Z0W3-1</id>
        <name>1</name>
        <sequence type="displayed"/>
    </isoform>
    <isoform>
        <id>Q9Z0W3-2</id>
        <name>2</name>
        <sequence type="described" ref="VSP_018500 VSP_018501"/>
    </isoform>
</comment>
<proteinExistence type="evidence at protein level"/>
<dbReference type="EMBL" id="AF104415">
    <property type="protein sequence ID" value="AAD17922.2"/>
    <property type="molecule type" value="mRNA"/>
</dbReference>
<dbReference type="EMBL" id="AK012715">
    <property type="status" value="NOT_ANNOTATED_CDS"/>
    <property type="molecule type" value="mRNA"/>
</dbReference>
<dbReference type="EMBL" id="AK155492">
    <property type="protein sequence ID" value="BAE33292.1"/>
    <property type="molecule type" value="mRNA"/>
</dbReference>
<dbReference type="EMBL" id="AK164802">
    <property type="protein sequence ID" value="BAE37926.1"/>
    <property type="molecule type" value="mRNA"/>
</dbReference>
<dbReference type="EMBL" id="AK171218">
    <property type="protein sequence ID" value="BAE42322.1"/>
    <property type="molecule type" value="mRNA"/>
</dbReference>
<dbReference type="EMBL" id="BC052450">
    <property type="protein sequence ID" value="AAH52450.1"/>
    <property type="molecule type" value="mRNA"/>
</dbReference>
<dbReference type="EMBL" id="BC054523">
    <property type="protein sequence ID" value="AAH54523.1"/>
    <property type="molecule type" value="mRNA"/>
</dbReference>
<dbReference type="EMBL" id="AK172911">
    <property type="protein sequence ID" value="BAD32189.1"/>
    <property type="molecule type" value="mRNA"/>
</dbReference>
<dbReference type="CCDS" id="CCDS16413.1">
    <molecule id="Q9Z0W3-1"/>
</dbReference>
<dbReference type="RefSeq" id="NP_067487.1">
    <molecule id="Q9Z0W3-1"/>
    <property type="nucleotide sequence ID" value="NM_021512.3"/>
</dbReference>
<dbReference type="RefSeq" id="XP_006500031.1">
    <molecule id="Q9Z0W3-1"/>
    <property type="nucleotide sequence ID" value="XM_006499968.5"/>
</dbReference>
<dbReference type="SMR" id="Q9Z0W3"/>
<dbReference type="BioGRID" id="208486">
    <property type="interactions" value="5"/>
</dbReference>
<dbReference type="ComplexPortal" id="CPX-4474">
    <property type="entry name" value="Nuclear pore complex"/>
</dbReference>
<dbReference type="FunCoup" id="Q9Z0W3">
    <property type="interactions" value="3281"/>
</dbReference>
<dbReference type="IntAct" id="Q9Z0W3">
    <property type="interactions" value="4"/>
</dbReference>
<dbReference type="MINT" id="Q9Z0W3"/>
<dbReference type="STRING" id="10090.ENSMUSP00000059289"/>
<dbReference type="GlyGen" id="Q9Z0W3">
    <property type="glycosylation" value="1 site, 1 O-linked glycan (1 site)"/>
</dbReference>
<dbReference type="iPTMnet" id="Q9Z0W3"/>
<dbReference type="PhosphoSitePlus" id="Q9Z0W3"/>
<dbReference type="SwissPalm" id="Q9Z0W3"/>
<dbReference type="jPOST" id="Q9Z0W3"/>
<dbReference type="PaxDb" id="10090-ENSMUSP00000059289"/>
<dbReference type="PeptideAtlas" id="Q9Z0W3"/>
<dbReference type="ProteomicsDB" id="253034">
    <molecule id="Q9Z0W3-1"/>
</dbReference>
<dbReference type="ProteomicsDB" id="253035">
    <molecule id="Q9Z0W3-2"/>
</dbReference>
<dbReference type="Pumba" id="Q9Z0W3"/>
<dbReference type="Antibodypedia" id="26888">
    <property type="antibodies" value="236 antibodies from 32 providers"/>
</dbReference>
<dbReference type="DNASU" id="59015"/>
<dbReference type="Ensembl" id="ENSMUST00000057481.7">
    <molecule id="Q9Z0W3-1"/>
    <property type="protein sequence ID" value="ENSMUSP00000059289.7"/>
    <property type="gene ID" value="ENSMUSG00000051329.14"/>
</dbReference>
<dbReference type="GeneID" id="59015"/>
<dbReference type="KEGG" id="mmu:59015"/>
<dbReference type="UCSC" id="uc008ksw.1">
    <molecule id="Q9Z0W3-1"/>
    <property type="organism name" value="mouse"/>
</dbReference>
<dbReference type="UCSC" id="uc008ksy.1">
    <molecule id="Q9Z0W3-2"/>
    <property type="organism name" value="mouse"/>
</dbReference>
<dbReference type="AGR" id="MGI:1926227"/>
<dbReference type="CTD" id="23279"/>
<dbReference type="MGI" id="MGI:1926227">
    <property type="gene designation" value="Nup160"/>
</dbReference>
<dbReference type="VEuPathDB" id="HostDB:ENSMUSG00000051329"/>
<dbReference type="eggNOG" id="KOG4521">
    <property type="taxonomic scope" value="Eukaryota"/>
</dbReference>
<dbReference type="GeneTree" id="ENSGT00390000000972"/>
<dbReference type="HOGENOM" id="CLU_005083_0_0_1"/>
<dbReference type="InParanoid" id="Q9Z0W3"/>
<dbReference type="OMA" id="TLWKNNM"/>
<dbReference type="OrthoDB" id="67716at2759"/>
<dbReference type="PhylomeDB" id="Q9Z0W3"/>
<dbReference type="TreeFam" id="TF353082"/>
<dbReference type="Reactome" id="R-MMU-141444">
    <property type="pathway name" value="Amplification of signal from unattached kinetochores via a MAD2 inhibitory signal"/>
</dbReference>
<dbReference type="Reactome" id="R-MMU-159227">
    <property type="pathway name" value="Transport of the SLBP independent Mature mRNA"/>
</dbReference>
<dbReference type="Reactome" id="R-MMU-159230">
    <property type="pathway name" value="Transport of the SLBP Dependant Mature mRNA"/>
</dbReference>
<dbReference type="Reactome" id="R-MMU-159231">
    <property type="pathway name" value="Transport of Mature mRNA Derived from an Intronless Transcript"/>
</dbReference>
<dbReference type="Reactome" id="R-MMU-159236">
    <property type="pathway name" value="Transport of Mature mRNA derived from an Intron-Containing Transcript"/>
</dbReference>
<dbReference type="Reactome" id="R-MMU-170822">
    <property type="pathway name" value="Regulation of Glucokinase by Glucokinase Regulatory Protein"/>
</dbReference>
<dbReference type="Reactome" id="R-MMU-191859">
    <property type="pathway name" value="snRNP Assembly"/>
</dbReference>
<dbReference type="Reactome" id="R-MMU-2467813">
    <property type="pathway name" value="Separation of Sister Chromatids"/>
</dbReference>
<dbReference type="Reactome" id="R-MMU-2500257">
    <property type="pathway name" value="Resolution of Sister Chromatid Cohesion"/>
</dbReference>
<dbReference type="Reactome" id="R-MMU-3108214">
    <property type="pathway name" value="SUMOylation of DNA damage response and repair proteins"/>
</dbReference>
<dbReference type="Reactome" id="R-MMU-3232142">
    <property type="pathway name" value="SUMOylation of ubiquitinylation proteins"/>
</dbReference>
<dbReference type="Reactome" id="R-MMU-3301854">
    <property type="pathway name" value="Nuclear Pore Complex (NPC) Disassembly"/>
</dbReference>
<dbReference type="Reactome" id="R-MMU-3371453">
    <property type="pathway name" value="Regulation of HSF1-mediated heat shock response"/>
</dbReference>
<dbReference type="Reactome" id="R-MMU-4085377">
    <property type="pathway name" value="SUMOylation of SUMOylation proteins"/>
</dbReference>
<dbReference type="Reactome" id="R-MMU-4551638">
    <property type="pathway name" value="SUMOylation of chromatin organization proteins"/>
</dbReference>
<dbReference type="Reactome" id="R-MMU-4570464">
    <property type="pathway name" value="SUMOylation of RNA binding proteins"/>
</dbReference>
<dbReference type="Reactome" id="R-MMU-4615885">
    <property type="pathway name" value="SUMOylation of DNA replication proteins"/>
</dbReference>
<dbReference type="Reactome" id="R-MMU-5578749">
    <property type="pathway name" value="Transcriptional regulation by small RNAs"/>
</dbReference>
<dbReference type="Reactome" id="R-MMU-5663220">
    <property type="pathway name" value="RHO GTPases Activate Formins"/>
</dbReference>
<dbReference type="Reactome" id="R-MMU-68877">
    <property type="pathway name" value="Mitotic Prometaphase"/>
</dbReference>
<dbReference type="Reactome" id="R-MMU-9615933">
    <property type="pathway name" value="Postmitotic nuclear pore complex (NPC) reformation"/>
</dbReference>
<dbReference type="Reactome" id="R-MMU-9648025">
    <property type="pathway name" value="EML4 and NUDC in mitotic spindle formation"/>
</dbReference>
<dbReference type="BioGRID-ORCS" id="59015">
    <property type="hits" value="26 hits in 75 CRISPR screens"/>
</dbReference>
<dbReference type="ChiTaRS" id="Nup160">
    <property type="organism name" value="mouse"/>
</dbReference>
<dbReference type="PRO" id="PR:Q9Z0W3"/>
<dbReference type="Proteomes" id="UP000000589">
    <property type="component" value="Chromosome 2"/>
</dbReference>
<dbReference type="RNAct" id="Q9Z0W3">
    <property type="molecule type" value="protein"/>
</dbReference>
<dbReference type="Bgee" id="ENSMUSG00000051329">
    <property type="expression patterns" value="Expressed in spermatid and 250 other cell types or tissues"/>
</dbReference>
<dbReference type="GO" id="GO:0005635">
    <property type="term" value="C:nuclear envelope"/>
    <property type="evidence" value="ECO:0000266"/>
    <property type="project" value="ComplexPortal"/>
</dbReference>
<dbReference type="GO" id="GO:0005643">
    <property type="term" value="C:nuclear pore"/>
    <property type="evidence" value="ECO:0000314"/>
    <property type="project" value="UniProtKB"/>
</dbReference>
<dbReference type="GO" id="GO:0031080">
    <property type="term" value="C:nuclear pore outer ring"/>
    <property type="evidence" value="ECO:0000250"/>
    <property type="project" value="UniProtKB"/>
</dbReference>
<dbReference type="GO" id="GO:0017056">
    <property type="term" value="F:structural constituent of nuclear pore"/>
    <property type="evidence" value="ECO:0000314"/>
    <property type="project" value="UniProtKB"/>
</dbReference>
<dbReference type="GO" id="GO:0006406">
    <property type="term" value="P:mRNA export from nucleus"/>
    <property type="evidence" value="ECO:0000314"/>
    <property type="project" value="UniProtKB"/>
</dbReference>
<dbReference type="GO" id="GO:0006913">
    <property type="term" value="P:nucleocytoplasmic transport"/>
    <property type="evidence" value="ECO:0000303"/>
    <property type="project" value="ComplexPortal"/>
</dbReference>
<dbReference type="GO" id="GO:0015031">
    <property type="term" value="P:protein transport"/>
    <property type="evidence" value="ECO:0007669"/>
    <property type="project" value="UniProtKB-KW"/>
</dbReference>
<dbReference type="InterPro" id="IPR021717">
    <property type="entry name" value="Nucleoporin_Nup160"/>
</dbReference>
<dbReference type="InterPro" id="IPR056547">
    <property type="entry name" value="NUP160_helical"/>
</dbReference>
<dbReference type="InterPro" id="IPR056536">
    <property type="entry name" value="TPR_NUP160_C"/>
</dbReference>
<dbReference type="InterPro" id="IPR056535">
    <property type="entry name" value="TPR_NUP160_M"/>
</dbReference>
<dbReference type="PANTHER" id="PTHR21286">
    <property type="entry name" value="NUCLEAR PORE COMPLEX PROTEIN NUP160"/>
    <property type="match status" value="1"/>
</dbReference>
<dbReference type="PANTHER" id="PTHR21286:SF0">
    <property type="entry name" value="NUCLEAR PORE COMPLEX PROTEIN NUP160"/>
    <property type="match status" value="1"/>
</dbReference>
<dbReference type="Pfam" id="PF11715">
    <property type="entry name" value="Beta-prop_Nup120_160"/>
    <property type="match status" value="1"/>
</dbReference>
<dbReference type="Pfam" id="PF23345">
    <property type="entry name" value="NUP160_helical"/>
    <property type="match status" value="1"/>
</dbReference>
<dbReference type="Pfam" id="PF23354">
    <property type="entry name" value="TPR_NUP160_120_M"/>
    <property type="match status" value="1"/>
</dbReference>
<dbReference type="Pfam" id="PF23347">
    <property type="entry name" value="TPR_Nup160_C"/>
    <property type="match status" value="1"/>
</dbReference>
<protein>
    <recommendedName>
        <fullName>Nuclear pore complex protein Nup160</fullName>
    </recommendedName>
    <alternativeName>
        <fullName>160 kDa nucleoporin</fullName>
    </alternativeName>
    <alternativeName>
        <fullName>Gene trap locus 1-13 protein</fullName>
        <shortName>GTL-13</shortName>
    </alternativeName>
    <alternativeName>
        <fullName>Nucleoporin Nup160</fullName>
    </alternativeName>
</protein>
<feature type="chain" id="PRO_0000204852" description="Nuclear pore complex protein Nup160">
    <location>
        <begin position="1"/>
        <end position="1402"/>
    </location>
</feature>
<feature type="modified residue" description="Phosphoserine" evidence="1">
    <location>
        <position position="10"/>
    </location>
</feature>
<feature type="modified residue" description="Phosphoserine" evidence="8">
    <location>
        <position position="456"/>
    </location>
</feature>
<feature type="modified residue" description="Phosphoserine" evidence="1">
    <location>
        <position position="915"/>
    </location>
</feature>
<feature type="modified residue" description="Phosphoserine" evidence="6 7 8">
    <location>
        <position position="1123"/>
    </location>
</feature>
<feature type="splice variant" id="VSP_018500" description="In isoform 2." evidence="4">
    <original>WPSN</original>
    <variation>YPFA</variation>
    <location>
        <begin position="836"/>
        <end position="839"/>
    </location>
</feature>
<feature type="splice variant" id="VSP_018501" description="In isoform 2." evidence="4">
    <location>
        <begin position="840"/>
        <end position="1402"/>
    </location>
</feature>
<feature type="sequence conflict" description="In Ref. 3; AAH52450/AAH54523." evidence="5" ref="3">
    <location>
        <begin position="562"/>
        <end position="563"/>
    </location>
</feature>
<feature type="sequence conflict" description="In Ref. 2." evidence="5" ref="2">
    <original>A</original>
    <variation>T</variation>
    <location>
        <position position="1156"/>
    </location>
</feature>
<feature type="sequence conflict" description="In Ref. 2; AK012715." evidence="5" ref="2">
    <original>E</original>
    <variation>G</variation>
    <location>
        <position position="1314"/>
    </location>
</feature>
<feature type="sequence conflict" description="In Ref. 2; AK012715." evidence="5" ref="2">
    <original>N</original>
    <variation>D</variation>
    <location>
        <position position="1368"/>
    </location>
</feature>
<keyword id="KW-0025">Alternative splicing</keyword>
<keyword id="KW-0509">mRNA transport</keyword>
<keyword id="KW-0906">Nuclear pore complex</keyword>
<keyword id="KW-0539">Nucleus</keyword>
<keyword id="KW-0597">Phosphoprotein</keyword>
<keyword id="KW-0653">Protein transport</keyword>
<keyword id="KW-1185">Reference proteome</keyword>
<keyword id="KW-0811">Translocation</keyword>
<keyword id="KW-0813">Transport</keyword>
<reference key="1">
    <citation type="submission" date="1999-06" db="EMBL/GenBank/DDBJ databases">
        <title>Mus musculus mRNA for gtl-13 (gene trap locus-13), similar to human KIAA0197 gene (D83781), complete cds.</title>
        <authorList>
            <person name="Van de Putte T."/>
            <person name="Cozijnsen M."/>
            <person name="Dewulf N."/>
            <person name="Tylzanowski P."/>
            <person name="Lonnoy O."/>
            <person name="Huylebroeck D."/>
        </authorList>
    </citation>
    <scope>NUCLEOTIDE SEQUENCE [MRNA] (ISOFORM 1)</scope>
    <source>
        <strain>129/SvJ</strain>
    </source>
</reference>
<reference key="2">
    <citation type="journal article" date="2005" name="Science">
        <title>The transcriptional landscape of the mammalian genome.</title>
        <authorList>
            <person name="Carninci P."/>
            <person name="Kasukawa T."/>
            <person name="Katayama S."/>
            <person name="Gough J."/>
            <person name="Frith M.C."/>
            <person name="Maeda N."/>
            <person name="Oyama R."/>
            <person name="Ravasi T."/>
            <person name="Lenhard B."/>
            <person name="Wells C."/>
            <person name="Kodzius R."/>
            <person name="Shimokawa K."/>
            <person name="Bajic V.B."/>
            <person name="Brenner S.E."/>
            <person name="Batalov S."/>
            <person name="Forrest A.R."/>
            <person name="Zavolan M."/>
            <person name="Davis M.J."/>
            <person name="Wilming L.G."/>
            <person name="Aidinis V."/>
            <person name="Allen J.E."/>
            <person name="Ambesi-Impiombato A."/>
            <person name="Apweiler R."/>
            <person name="Aturaliya R.N."/>
            <person name="Bailey T.L."/>
            <person name="Bansal M."/>
            <person name="Baxter L."/>
            <person name="Beisel K.W."/>
            <person name="Bersano T."/>
            <person name="Bono H."/>
            <person name="Chalk A.M."/>
            <person name="Chiu K.P."/>
            <person name="Choudhary V."/>
            <person name="Christoffels A."/>
            <person name="Clutterbuck D.R."/>
            <person name="Crowe M.L."/>
            <person name="Dalla E."/>
            <person name="Dalrymple B.P."/>
            <person name="de Bono B."/>
            <person name="Della Gatta G."/>
            <person name="di Bernardo D."/>
            <person name="Down T."/>
            <person name="Engstrom P."/>
            <person name="Fagiolini M."/>
            <person name="Faulkner G."/>
            <person name="Fletcher C.F."/>
            <person name="Fukushima T."/>
            <person name="Furuno M."/>
            <person name="Futaki S."/>
            <person name="Gariboldi M."/>
            <person name="Georgii-Hemming P."/>
            <person name="Gingeras T.R."/>
            <person name="Gojobori T."/>
            <person name="Green R.E."/>
            <person name="Gustincich S."/>
            <person name="Harbers M."/>
            <person name="Hayashi Y."/>
            <person name="Hensch T.K."/>
            <person name="Hirokawa N."/>
            <person name="Hill D."/>
            <person name="Huminiecki L."/>
            <person name="Iacono M."/>
            <person name="Ikeo K."/>
            <person name="Iwama A."/>
            <person name="Ishikawa T."/>
            <person name="Jakt M."/>
            <person name="Kanapin A."/>
            <person name="Katoh M."/>
            <person name="Kawasawa Y."/>
            <person name="Kelso J."/>
            <person name="Kitamura H."/>
            <person name="Kitano H."/>
            <person name="Kollias G."/>
            <person name="Krishnan S.P."/>
            <person name="Kruger A."/>
            <person name="Kummerfeld S.K."/>
            <person name="Kurochkin I.V."/>
            <person name="Lareau L.F."/>
            <person name="Lazarevic D."/>
            <person name="Lipovich L."/>
            <person name="Liu J."/>
            <person name="Liuni S."/>
            <person name="McWilliam S."/>
            <person name="Madan Babu M."/>
            <person name="Madera M."/>
            <person name="Marchionni L."/>
            <person name="Matsuda H."/>
            <person name="Matsuzawa S."/>
            <person name="Miki H."/>
            <person name="Mignone F."/>
            <person name="Miyake S."/>
            <person name="Morris K."/>
            <person name="Mottagui-Tabar S."/>
            <person name="Mulder N."/>
            <person name="Nakano N."/>
            <person name="Nakauchi H."/>
            <person name="Ng P."/>
            <person name="Nilsson R."/>
            <person name="Nishiguchi S."/>
            <person name="Nishikawa S."/>
            <person name="Nori F."/>
            <person name="Ohara O."/>
            <person name="Okazaki Y."/>
            <person name="Orlando V."/>
            <person name="Pang K.C."/>
            <person name="Pavan W.J."/>
            <person name="Pavesi G."/>
            <person name="Pesole G."/>
            <person name="Petrovsky N."/>
            <person name="Piazza S."/>
            <person name="Reed J."/>
            <person name="Reid J.F."/>
            <person name="Ring B.Z."/>
            <person name="Ringwald M."/>
            <person name="Rost B."/>
            <person name="Ruan Y."/>
            <person name="Salzberg S.L."/>
            <person name="Sandelin A."/>
            <person name="Schneider C."/>
            <person name="Schoenbach C."/>
            <person name="Sekiguchi K."/>
            <person name="Semple C.A."/>
            <person name="Seno S."/>
            <person name="Sessa L."/>
            <person name="Sheng Y."/>
            <person name="Shibata Y."/>
            <person name="Shimada H."/>
            <person name="Shimada K."/>
            <person name="Silva D."/>
            <person name="Sinclair B."/>
            <person name="Sperling S."/>
            <person name="Stupka E."/>
            <person name="Sugiura K."/>
            <person name="Sultana R."/>
            <person name="Takenaka Y."/>
            <person name="Taki K."/>
            <person name="Tammoja K."/>
            <person name="Tan S.L."/>
            <person name="Tang S."/>
            <person name="Taylor M.S."/>
            <person name="Tegner J."/>
            <person name="Teichmann S.A."/>
            <person name="Ueda H.R."/>
            <person name="van Nimwegen E."/>
            <person name="Verardo R."/>
            <person name="Wei C.L."/>
            <person name="Yagi K."/>
            <person name="Yamanishi H."/>
            <person name="Zabarovsky E."/>
            <person name="Zhu S."/>
            <person name="Zimmer A."/>
            <person name="Hide W."/>
            <person name="Bult C."/>
            <person name="Grimmond S.M."/>
            <person name="Teasdale R.D."/>
            <person name="Liu E.T."/>
            <person name="Brusic V."/>
            <person name="Quackenbush J."/>
            <person name="Wahlestedt C."/>
            <person name="Mattick J.S."/>
            <person name="Hume D.A."/>
            <person name="Kai C."/>
            <person name="Sasaki D."/>
            <person name="Tomaru Y."/>
            <person name="Fukuda S."/>
            <person name="Kanamori-Katayama M."/>
            <person name="Suzuki M."/>
            <person name="Aoki J."/>
            <person name="Arakawa T."/>
            <person name="Iida J."/>
            <person name="Imamura K."/>
            <person name="Itoh M."/>
            <person name="Kato T."/>
            <person name="Kawaji H."/>
            <person name="Kawagashira N."/>
            <person name="Kawashima T."/>
            <person name="Kojima M."/>
            <person name="Kondo S."/>
            <person name="Konno H."/>
            <person name="Nakano K."/>
            <person name="Ninomiya N."/>
            <person name="Nishio T."/>
            <person name="Okada M."/>
            <person name="Plessy C."/>
            <person name="Shibata K."/>
            <person name="Shiraki T."/>
            <person name="Suzuki S."/>
            <person name="Tagami M."/>
            <person name="Waki K."/>
            <person name="Watahiki A."/>
            <person name="Okamura-Oho Y."/>
            <person name="Suzuki H."/>
            <person name="Kawai J."/>
            <person name="Hayashizaki Y."/>
        </authorList>
    </citation>
    <scope>NUCLEOTIDE SEQUENCE [LARGE SCALE MRNA] (ISOFORM 2)</scope>
    <scope>NUCLEOTIDE SEQUENCE [LARGE SCALE MRNA] OF 1-985 AND 1151-1402 (ISOFORM 1)</scope>
    <source>
        <strain>C57BL/6J</strain>
        <strain>NOD</strain>
        <tissue>Dendritic cell</tissue>
        <tissue>Embryo</tissue>
        <tissue>Heart</tissue>
    </source>
</reference>
<reference key="3">
    <citation type="journal article" date="2004" name="Genome Res.">
        <title>The status, quality, and expansion of the NIH full-length cDNA project: the Mammalian Gene Collection (MGC).</title>
        <authorList>
            <consortium name="The MGC Project Team"/>
        </authorList>
    </citation>
    <scope>NUCLEOTIDE SEQUENCE [LARGE SCALE MRNA] (ISOFORM 1)</scope>
    <source>
        <strain>C57BL/6J</strain>
        <tissue>Brain</tissue>
    </source>
</reference>
<reference key="4">
    <citation type="journal article" date="2004" name="DNA Res.">
        <title>Prediction of the coding sequences of mouse homologues of KIAA gene: IV. The complete nucleotide sequences of 500 mouse KIAA-homologous cDNAs identified by screening of terminal sequences of cDNA clones randomly sampled from size-fractionated libraries.</title>
        <authorList>
            <person name="Okazaki N."/>
            <person name="Kikuno R."/>
            <person name="Ohara R."/>
            <person name="Inamoto S."/>
            <person name="Koseki H."/>
            <person name="Hiraoka S."/>
            <person name="Saga Y."/>
            <person name="Seino S."/>
            <person name="Nishimura M."/>
            <person name="Kaisho T."/>
            <person name="Hoshino K."/>
            <person name="Kitamura H."/>
            <person name="Nagase T."/>
            <person name="Ohara O."/>
            <person name="Koga H."/>
        </authorList>
    </citation>
    <scope>NUCLEOTIDE SEQUENCE [LARGE SCALE MRNA] OF 542-1402 (ISOFORM 1)</scope>
    <source>
        <tissue>Natural killer cell</tissue>
    </source>
</reference>
<reference key="5">
    <citation type="journal article" date="2001" name="J. Cell Biol.">
        <title>An evolutionarily conserved NPC subcomplex, which redistributes in part to kinetochores in mammalian cells.</title>
        <authorList>
            <person name="Belgareh N."/>
            <person name="Rabut G."/>
            <person name="Bai S.W."/>
            <person name="van Overbeek M."/>
            <person name="Beaudouin J."/>
            <person name="Daigle N."/>
            <person name="Zatsepina O.V."/>
            <person name="Pasteau F."/>
            <person name="Labas V."/>
            <person name="Fromont-Racine M."/>
            <person name="Ellenberg J."/>
            <person name="Doye V."/>
        </authorList>
    </citation>
    <scope>FUNCTION</scope>
    <scope>IDENTIFICATION IN THE NUCLEAR PORE COMPLEX</scope>
    <scope>SUBUNIT</scope>
    <scope>SUBCELLULAR LOCATION</scope>
</reference>
<reference key="6">
    <citation type="journal article" date="2001" name="J. Cell Biol.">
        <title>Novel vertebrate nucleoporins Nup133 and Nup160 play a role in mRNA export.</title>
        <authorList>
            <person name="Vasu S."/>
            <person name="Shah S."/>
            <person name="Orjalo A."/>
            <person name="Park M."/>
            <person name="Fischer W.H."/>
            <person name="Forbes D.J."/>
        </authorList>
    </citation>
    <scope>FUNCTION</scope>
    <scope>IDENTIFICATION IN THE NUCLEAR PORE COMPLEX</scope>
    <scope>SUBUNIT</scope>
    <scope>SUBCELLULAR LOCATION</scope>
</reference>
<reference key="7">
    <citation type="journal article" date="2007" name="Proc. Natl. Acad. Sci. U.S.A.">
        <title>Large-scale phosphorylation analysis of mouse liver.</title>
        <authorList>
            <person name="Villen J."/>
            <person name="Beausoleil S.A."/>
            <person name="Gerber S.A."/>
            <person name="Gygi S.P."/>
        </authorList>
    </citation>
    <scope>PHOSPHORYLATION [LARGE SCALE ANALYSIS] AT SER-1123</scope>
    <scope>IDENTIFICATION BY MASS SPECTROMETRY [LARGE SCALE ANALYSIS]</scope>
    <source>
        <tissue>Liver</tissue>
    </source>
</reference>
<reference key="8">
    <citation type="journal article" date="2009" name="Mol. Cell. Proteomics">
        <title>Large scale localization of protein phosphorylation by use of electron capture dissociation mass spectrometry.</title>
        <authorList>
            <person name="Sweet S.M."/>
            <person name="Bailey C.M."/>
            <person name="Cunningham D.L."/>
            <person name="Heath J.K."/>
            <person name="Cooper H.J."/>
        </authorList>
    </citation>
    <scope>PHOSPHORYLATION [LARGE SCALE ANALYSIS] AT SER-1123</scope>
    <scope>IDENTIFICATION BY MASS SPECTROMETRY [LARGE SCALE ANALYSIS]</scope>
    <source>
        <tissue>Embryonic fibroblast</tissue>
    </source>
</reference>
<reference key="9">
    <citation type="journal article" date="2010" name="Cell">
        <title>A tissue-specific atlas of mouse protein phosphorylation and expression.</title>
        <authorList>
            <person name="Huttlin E.L."/>
            <person name="Jedrychowski M.P."/>
            <person name="Elias J.E."/>
            <person name="Goswami T."/>
            <person name="Rad R."/>
            <person name="Beausoleil S.A."/>
            <person name="Villen J."/>
            <person name="Haas W."/>
            <person name="Sowa M.E."/>
            <person name="Gygi S.P."/>
        </authorList>
    </citation>
    <scope>PHOSPHORYLATION [LARGE SCALE ANALYSIS] AT SER-456 AND SER-1123</scope>
    <scope>IDENTIFICATION BY MASS SPECTROMETRY [LARGE SCALE ANALYSIS]</scope>
    <source>
        <tissue>Brain</tissue>
        <tissue>Brown adipose tissue</tissue>
        <tissue>Kidney</tissue>
        <tissue>Liver</tissue>
        <tissue>Lung</tissue>
        <tissue>Pancreas</tissue>
        <tissue>Spleen</tissue>
        <tissue>Testis</tissue>
    </source>
</reference>
<evidence type="ECO:0000250" key="1">
    <source>
        <dbReference type="UniProtKB" id="Q12769"/>
    </source>
</evidence>
<evidence type="ECO:0000269" key="2">
    <source>
    </source>
</evidence>
<evidence type="ECO:0000269" key="3">
    <source>
    </source>
</evidence>
<evidence type="ECO:0000303" key="4">
    <source>
    </source>
</evidence>
<evidence type="ECO:0000305" key="5"/>
<evidence type="ECO:0007744" key="6">
    <source>
    </source>
</evidence>
<evidence type="ECO:0007744" key="7">
    <source>
    </source>
</evidence>
<evidence type="ECO:0007744" key="8">
    <source>
    </source>
</evidence>